<evidence type="ECO:0000255" key="1">
    <source>
        <dbReference type="HAMAP-Rule" id="MF_01011"/>
    </source>
</evidence>
<feature type="chain" id="PRO_1000198549" description="tRNA/tmRNA (uracil-C(5))-methyltransferase">
    <location>
        <begin position="1"/>
        <end position="361"/>
    </location>
</feature>
<feature type="active site" description="Nucleophile" evidence="1">
    <location>
        <position position="319"/>
    </location>
</feature>
<feature type="active site" description="Proton acceptor" evidence="1">
    <location>
        <position position="353"/>
    </location>
</feature>
<feature type="binding site" evidence="1">
    <location>
        <position position="185"/>
    </location>
    <ligand>
        <name>S-adenosyl-L-methionine</name>
        <dbReference type="ChEBI" id="CHEBI:59789"/>
    </ligand>
</feature>
<feature type="binding site" evidence="1">
    <location>
        <position position="213"/>
    </location>
    <ligand>
        <name>S-adenosyl-L-methionine</name>
        <dbReference type="ChEBI" id="CHEBI:59789"/>
    </ligand>
</feature>
<feature type="binding site" evidence="1">
    <location>
        <position position="218"/>
    </location>
    <ligand>
        <name>S-adenosyl-L-methionine</name>
        <dbReference type="ChEBI" id="CHEBI:59789"/>
    </ligand>
</feature>
<feature type="binding site" evidence="1">
    <location>
        <position position="234"/>
    </location>
    <ligand>
        <name>S-adenosyl-L-methionine</name>
        <dbReference type="ChEBI" id="CHEBI:59789"/>
    </ligand>
</feature>
<feature type="binding site" evidence="1">
    <location>
        <position position="294"/>
    </location>
    <ligand>
        <name>S-adenosyl-L-methionine</name>
        <dbReference type="ChEBI" id="CHEBI:59789"/>
    </ligand>
</feature>
<proteinExistence type="inferred from homology"/>
<accession>B1J3Q4</accession>
<comment type="function">
    <text evidence="1">Dual-specificity methyltransferase that catalyzes the formation of 5-methyluridine at position 54 (m5U54) in all tRNAs, and that of position 341 (m5U341) in tmRNA (transfer-mRNA).</text>
</comment>
<comment type="catalytic activity">
    <reaction evidence="1">
        <text>uridine(54) in tRNA + S-adenosyl-L-methionine = 5-methyluridine(54) in tRNA + S-adenosyl-L-homocysteine + H(+)</text>
        <dbReference type="Rhea" id="RHEA:42712"/>
        <dbReference type="Rhea" id="RHEA-COMP:10167"/>
        <dbReference type="Rhea" id="RHEA-COMP:10193"/>
        <dbReference type="ChEBI" id="CHEBI:15378"/>
        <dbReference type="ChEBI" id="CHEBI:57856"/>
        <dbReference type="ChEBI" id="CHEBI:59789"/>
        <dbReference type="ChEBI" id="CHEBI:65315"/>
        <dbReference type="ChEBI" id="CHEBI:74447"/>
        <dbReference type="EC" id="2.1.1.35"/>
    </reaction>
</comment>
<comment type="catalytic activity">
    <reaction evidence="1">
        <text>uridine(341) in tmRNA + S-adenosyl-L-methionine = 5-methyluridine(341) in tmRNA + S-adenosyl-L-homocysteine + H(+)</text>
        <dbReference type="Rhea" id="RHEA:43612"/>
        <dbReference type="Rhea" id="RHEA-COMP:10630"/>
        <dbReference type="Rhea" id="RHEA-COMP:10631"/>
        <dbReference type="ChEBI" id="CHEBI:15378"/>
        <dbReference type="ChEBI" id="CHEBI:57856"/>
        <dbReference type="ChEBI" id="CHEBI:59789"/>
        <dbReference type="ChEBI" id="CHEBI:65315"/>
        <dbReference type="ChEBI" id="CHEBI:74447"/>
    </reaction>
</comment>
<comment type="similarity">
    <text evidence="1">Belongs to the class I-like SAM-binding methyltransferase superfamily. RNA M5U methyltransferase family. TrmA subfamily.</text>
</comment>
<gene>
    <name evidence="1" type="primary">trmA</name>
    <name type="ordered locus">PputW619_0784</name>
</gene>
<reference key="1">
    <citation type="submission" date="2008-02" db="EMBL/GenBank/DDBJ databases">
        <title>Complete sequence of Pseudomonas putida W619.</title>
        <authorList>
            <person name="Copeland A."/>
            <person name="Lucas S."/>
            <person name="Lapidus A."/>
            <person name="Barry K."/>
            <person name="Detter J.C."/>
            <person name="Glavina del Rio T."/>
            <person name="Dalin E."/>
            <person name="Tice H."/>
            <person name="Pitluck S."/>
            <person name="Chain P."/>
            <person name="Malfatti S."/>
            <person name="Shin M."/>
            <person name="Vergez L."/>
            <person name="Schmutz J."/>
            <person name="Larimer F."/>
            <person name="Land M."/>
            <person name="Hauser L."/>
            <person name="Kyrpides N."/>
            <person name="Kim E."/>
            <person name="Taghavi S."/>
            <person name="Vangronsveld D."/>
            <person name="van der Lelie D."/>
            <person name="Richardson P."/>
        </authorList>
    </citation>
    <scope>NUCLEOTIDE SEQUENCE [LARGE SCALE GENOMIC DNA]</scope>
    <source>
        <strain>W619</strain>
    </source>
</reference>
<protein>
    <recommendedName>
        <fullName evidence="1">tRNA/tmRNA (uracil-C(5))-methyltransferase</fullName>
        <ecNumber evidence="1">2.1.1.-</ecNumber>
        <ecNumber evidence="1">2.1.1.35</ecNumber>
    </recommendedName>
    <alternativeName>
        <fullName evidence="1">tRNA (uracil(54)-C(5))-methyltransferase</fullName>
    </alternativeName>
    <alternativeName>
        <fullName evidence="1">tRNA(m5U54)-methyltransferase</fullName>
        <shortName evidence="1">RUMT</shortName>
    </alternativeName>
    <alternativeName>
        <fullName evidence="1">tmRNA (uracil(341)-C(5))-methyltransferase</fullName>
    </alternativeName>
</protein>
<name>TRMA_PSEPW</name>
<dbReference type="EC" id="2.1.1.-" evidence="1"/>
<dbReference type="EC" id="2.1.1.35" evidence="1"/>
<dbReference type="EMBL" id="CP000949">
    <property type="protein sequence ID" value="ACA71289.1"/>
    <property type="molecule type" value="Genomic_DNA"/>
</dbReference>
<dbReference type="SMR" id="B1J3Q4"/>
<dbReference type="STRING" id="390235.PputW619_0784"/>
<dbReference type="KEGG" id="ppw:PputW619_0784"/>
<dbReference type="eggNOG" id="COG2265">
    <property type="taxonomic scope" value="Bacteria"/>
</dbReference>
<dbReference type="HOGENOM" id="CLU_043022_0_0_6"/>
<dbReference type="OrthoDB" id="9804590at2"/>
<dbReference type="GO" id="GO:0005829">
    <property type="term" value="C:cytosol"/>
    <property type="evidence" value="ECO:0007669"/>
    <property type="project" value="TreeGrafter"/>
</dbReference>
<dbReference type="GO" id="GO:0019843">
    <property type="term" value="F:rRNA binding"/>
    <property type="evidence" value="ECO:0007669"/>
    <property type="project" value="TreeGrafter"/>
</dbReference>
<dbReference type="GO" id="GO:0030697">
    <property type="term" value="F:tRNA (uracil(54)-C5)-methyltransferase activity, S-adenosyl methionine-dependent"/>
    <property type="evidence" value="ECO:0007669"/>
    <property type="project" value="UniProtKB-UniRule"/>
</dbReference>
<dbReference type="GO" id="GO:0000049">
    <property type="term" value="F:tRNA binding"/>
    <property type="evidence" value="ECO:0007669"/>
    <property type="project" value="TreeGrafter"/>
</dbReference>
<dbReference type="GO" id="GO:0030488">
    <property type="term" value="P:tRNA methylation"/>
    <property type="evidence" value="ECO:0007669"/>
    <property type="project" value="UniProtKB-UniRule"/>
</dbReference>
<dbReference type="CDD" id="cd02440">
    <property type="entry name" value="AdoMet_MTases"/>
    <property type="match status" value="1"/>
</dbReference>
<dbReference type="FunFam" id="2.40.50.1070:FF:000001">
    <property type="entry name" value="tRNA/tmRNA (uracil-C(5))-methyltransferase"/>
    <property type="match status" value="1"/>
</dbReference>
<dbReference type="FunFam" id="3.40.50.150:FF:000012">
    <property type="entry name" value="tRNA/tmRNA (uracil-C(5))-methyltransferase"/>
    <property type="match status" value="1"/>
</dbReference>
<dbReference type="Gene3D" id="2.40.50.1070">
    <property type="match status" value="1"/>
</dbReference>
<dbReference type="Gene3D" id="3.40.50.150">
    <property type="entry name" value="Vaccinia Virus protein VP39"/>
    <property type="match status" value="1"/>
</dbReference>
<dbReference type="HAMAP" id="MF_01011">
    <property type="entry name" value="RNA_methyltr_TrmA"/>
    <property type="match status" value="1"/>
</dbReference>
<dbReference type="InterPro" id="IPR030390">
    <property type="entry name" value="MeTrfase_TrmA_AS"/>
</dbReference>
<dbReference type="InterPro" id="IPR030391">
    <property type="entry name" value="MeTrfase_TrmA_CS"/>
</dbReference>
<dbReference type="InterPro" id="IPR029063">
    <property type="entry name" value="SAM-dependent_MTases_sf"/>
</dbReference>
<dbReference type="InterPro" id="IPR011869">
    <property type="entry name" value="TrmA_MeTrfase"/>
</dbReference>
<dbReference type="InterPro" id="IPR010280">
    <property type="entry name" value="U5_MeTrfase_fam"/>
</dbReference>
<dbReference type="NCBIfam" id="TIGR02143">
    <property type="entry name" value="trmA_only"/>
    <property type="match status" value="1"/>
</dbReference>
<dbReference type="PANTHER" id="PTHR47790">
    <property type="entry name" value="TRNA/TMRNA (URACIL-C(5))-METHYLTRANSFERASE"/>
    <property type="match status" value="1"/>
</dbReference>
<dbReference type="PANTHER" id="PTHR47790:SF2">
    <property type="entry name" value="TRNA_TMRNA (URACIL-C(5))-METHYLTRANSFERASE"/>
    <property type="match status" value="1"/>
</dbReference>
<dbReference type="Pfam" id="PF05958">
    <property type="entry name" value="tRNA_U5-meth_tr"/>
    <property type="match status" value="1"/>
</dbReference>
<dbReference type="SUPFAM" id="SSF53335">
    <property type="entry name" value="S-adenosyl-L-methionine-dependent methyltransferases"/>
    <property type="match status" value="1"/>
</dbReference>
<dbReference type="PROSITE" id="PS51687">
    <property type="entry name" value="SAM_MT_RNA_M5U"/>
    <property type="match status" value="1"/>
</dbReference>
<dbReference type="PROSITE" id="PS01230">
    <property type="entry name" value="TRMA_1"/>
    <property type="match status" value="1"/>
</dbReference>
<dbReference type="PROSITE" id="PS01231">
    <property type="entry name" value="TRMA_2"/>
    <property type="match status" value="1"/>
</dbReference>
<sequence length="361" mass="40897">MSAAFDPSAYDAQLQAKVTRLRELLAPFGAPQPAVFDSPREHYRLRAEFRLWREDGQRHYAMFAPGEKHKAILIDDFPIASERINALMPRLKAAWQASDELSNRLFQVEFLTTLAGDAMVTMCYHRPLDDAWEVAARQLAEELGVSLIGRSKGKRLVIGRDYAVEKLDVAGRVFSYRQPEGAFTQPNGAVNQKMLSWAYDAIGERDDDLLELYCGNGNFTLPLATRVRQVLATEISKTSVNAALSNLSENAVDNVRLVRLSAEELTQALNEVRPFRRLEGIDLKSYAFGTVFVDPPRAGMDPDTCELTRRFERILYISCNPETLAQNISQLQDTHRIERCALFDQFPYTHHMESGVLLVRR</sequence>
<keyword id="KW-0489">Methyltransferase</keyword>
<keyword id="KW-0949">S-adenosyl-L-methionine</keyword>
<keyword id="KW-0808">Transferase</keyword>
<keyword id="KW-0819">tRNA processing</keyword>
<organism>
    <name type="scientific">Pseudomonas putida (strain W619)</name>
    <dbReference type="NCBI Taxonomy" id="390235"/>
    <lineage>
        <taxon>Bacteria</taxon>
        <taxon>Pseudomonadati</taxon>
        <taxon>Pseudomonadota</taxon>
        <taxon>Gammaproteobacteria</taxon>
        <taxon>Pseudomonadales</taxon>
        <taxon>Pseudomonadaceae</taxon>
        <taxon>Pseudomonas</taxon>
    </lineage>
</organism>